<reference key="1">
    <citation type="journal article" date="1996" name="Nucleic Acids Res.">
        <title>Sequence analysis of 56 kb from the genome of the bacterium Mycoplasma pneumoniae comprising the dnaA region, the atp operon and a cluster of ribosomal protein genes.</title>
        <authorList>
            <person name="Hilbert H."/>
            <person name="Himmelreich R."/>
            <person name="Plagens H."/>
            <person name="Herrmann R."/>
        </authorList>
    </citation>
    <scope>NUCLEOTIDE SEQUENCE [GENOMIC DNA]</scope>
    <source>
        <strain>ATCC 29342 / M129 / Subtype 1</strain>
    </source>
</reference>
<reference key="2">
    <citation type="journal article" date="1996" name="Nucleic Acids Res.">
        <title>Complete sequence analysis of the genome of the bacterium Mycoplasma pneumoniae.</title>
        <authorList>
            <person name="Himmelreich R."/>
            <person name="Hilbert H."/>
            <person name="Plagens H."/>
            <person name="Pirkl E."/>
            <person name="Li B.-C."/>
            <person name="Herrmann R."/>
        </authorList>
    </citation>
    <scope>NUCLEOTIDE SEQUENCE [LARGE SCALE GENOMIC DNA]</scope>
    <source>
        <strain>ATCC 29342 / M129 / Subtype 1</strain>
    </source>
</reference>
<dbReference type="EMBL" id="U34816">
    <property type="protein sequence ID" value="AAC43649.1"/>
    <property type="molecule type" value="Genomic_DNA"/>
</dbReference>
<dbReference type="EMBL" id="U00089">
    <property type="protein sequence ID" value="AAB95805.1"/>
    <property type="molecule type" value="Genomic_DNA"/>
</dbReference>
<dbReference type="PIR" id="S62839">
    <property type="entry name" value="S62839"/>
</dbReference>
<dbReference type="RefSeq" id="NP_110374.1">
    <property type="nucleotide sequence ID" value="NC_000912.1"/>
</dbReference>
<dbReference type="RefSeq" id="WP_010875042.1">
    <property type="nucleotide sequence ID" value="NZ_OU342337.1"/>
</dbReference>
<dbReference type="SMR" id="Q50316"/>
<dbReference type="IntAct" id="Q50316">
    <property type="interactions" value="3"/>
</dbReference>
<dbReference type="STRING" id="272634.MPN_685"/>
<dbReference type="EnsemblBacteria" id="AAB95805">
    <property type="protein sequence ID" value="AAB95805"/>
    <property type="gene ID" value="MPN_685"/>
</dbReference>
<dbReference type="KEGG" id="mpn:MPN_685"/>
<dbReference type="PATRIC" id="fig|272634.6.peg.752"/>
<dbReference type="HOGENOM" id="CLU_000604_1_22_14"/>
<dbReference type="OrthoDB" id="9802264at2"/>
<dbReference type="BioCyc" id="MPNE272634:G1GJ3-1095-MONOMER"/>
<dbReference type="Proteomes" id="UP000000808">
    <property type="component" value="Chromosome"/>
</dbReference>
<dbReference type="GO" id="GO:0005524">
    <property type="term" value="F:ATP binding"/>
    <property type="evidence" value="ECO:0007669"/>
    <property type="project" value="UniProtKB-KW"/>
</dbReference>
<dbReference type="GO" id="GO:0016887">
    <property type="term" value="F:ATP hydrolysis activity"/>
    <property type="evidence" value="ECO:0007669"/>
    <property type="project" value="InterPro"/>
</dbReference>
<dbReference type="CDD" id="cd03255">
    <property type="entry name" value="ABC_MJ0796_LolCDE_FtsE"/>
    <property type="match status" value="1"/>
</dbReference>
<dbReference type="Gene3D" id="3.40.50.300">
    <property type="entry name" value="P-loop containing nucleotide triphosphate hydrolases"/>
    <property type="match status" value="1"/>
</dbReference>
<dbReference type="InterPro" id="IPR003593">
    <property type="entry name" value="AAA+_ATPase"/>
</dbReference>
<dbReference type="InterPro" id="IPR003439">
    <property type="entry name" value="ABC_transporter-like_ATP-bd"/>
</dbReference>
<dbReference type="InterPro" id="IPR017871">
    <property type="entry name" value="ABC_transporter-like_CS"/>
</dbReference>
<dbReference type="InterPro" id="IPR017911">
    <property type="entry name" value="MacB-like_ATP-bd"/>
</dbReference>
<dbReference type="InterPro" id="IPR027417">
    <property type="entry name" value="P-loop_NTPase"/>
</dbReference>
<dbReference type="PANTHER" id="PTHR42798:SF2">
    <property type="entry name" value="ABC TRANSPORTER ATP-BINDING PROTEIN MG467-RELATED"/>
    <property type="match status" value="1"/>
</dbReference>
<dbReference type="PANTHER" id="PTHR42798">
    <property type="entry name" value="LIPOPROTEIN-RELEASING SYSTEM ATP-BINDING PROTEIN LOLD"/>
    <property type="match status" value="1"/>
</dbReference>
<dbReference type="Pfam" id="PF00005">
    <property type="entry name" value="ABC_tran"/>
    <property type="match status" value="1"/>
</dbReference>
<dbReference type="SMART" id="SM00382">
    <property type="entry name" value="AAA"/>
    <property type="match status" value="1"/>
</dbReference>
<dbReference type="SUPFAM" id="SSF52540">
    <property type="entry name" value="P-loop containing nucleoside triphosphate hydrolases"/>
    <property type="match status" value="1"/>
</dbReference>
<dbReference type="PROSITE" id="PS00211">
    <property type="entry name" value="ABC_TRANSPORTER_1"/>
    <property type="match status" value="1"/>
</dbReference>
<dbReference type="PROSITE" id="PS50893">
    <property type="entry name" value="ABC_TRANSPORTER_2"/>
    <property type="match status" value="1"/>
</dbReference>
<evidence type="ECO:0000255" key="1">
    <source>
        <dbReference type="PROSITE-ProRule" id="PRU00434"/>
    </source>
</evidence>
<evidence type="ECO:0000305" key="2"/>
<gene>
    <name type="ordered locus">MPN_685</name>
    <name type="ORF">K05_orf284</name>
    <name type="ORF">MP157</name>
</gene>
<feature type="chain" id="PRO_0000093252" description="Putative ABC transporter ATP-binding protein MG468.1 homolog">
    <location>
        <begin position="1"/>
        <end position="284"/>
    </location>
</feature>
<feature type="domain" description="ABC transporter" evidence="1">
    <location>
        <begin position="53"/>
        <end position="284"/>
    </location>
</feature>
<feature type="binding site" evidence="1">
    <location>
        <begin position="89"/>
        <end position="96"/>
    </location>
    <ligand>
        <name>ATP</name>
        <dbReference type="ChEBI" id="CHEBI:30616"/>
    </ligand>
</feature>
<keyword id="KW-0067">ATP-binding</keyword>
<keyword id="KW-0547">Nucleotide-binding</keyword>
<keyword id="KW-1185">Reference proteome</keyword>
<keyword id="KW-0813">Transport</keyword>
<name>Y685_MYCPN</name>
<organism>
    <name type="scientific">Mycoplasma pneumoniae (strain ATCC 29342 / M129 / Subtype 1)</name>
    <name type="common">Mycoplasmoides pneumoniae</name>
    <dbReference type="NCBI Taxonomy" id="272634"/>
    <lineage>
        <taxon>Bacteria</taxon>
        <taxon>Bacillati</taxon>
        <taxon>Mycoplasmatota</taxon>
        <taxon>Mycoplasmoidales</taxon>
        <taxon>Mycoplasmoidaceae</taxon>
        <taxon>Mycoplasmoides</taxon>
    </lineage>
</organism>
<proteinExistence type="inferred from homology"/>
<protein>
    <recommendedName>
        <fullName>Putative ABC transporter ATP-binding protein MG468.1 homolog</fullName>
    </recommendedName>
</protein>
<accession>Q50316</accession>
<comment type="similarity">
    <text evidence="2">Belongs to the ABC transporter superfamily.</text>
</comment>
<sequence>MSLNAKNKRSLDYCLQWPDFCQSKKASKLIVKLNKKHPKRRHYKDPEAKHYDVLFKGVCKAVTNGITNQLICDHIDLKIAPGEFVVILGKSGSGKTSLLSLISALDRPTSGVSFVCGRSTICCNDAQLTSLRNKNVGYIFQQYGLLRDLNVDDNIKLAVPFKKRHNNNLEELLERLELKEHRNKKITKLSGGQQQRVAIARALIKEPRILFGDEPTGAVNVDISKKILQFFVEYNRDKGTTIVLVTHNEKIVELAKRVIKIHDGKIVADYLNQRPKTINEINWV</sequence>